<evidence type="ECO:0000255" key="1">
    <source>
        <dbReference type="HAMAP-Rule" id="MF_01306"/>
    </source>
</evidence>
<evidence type="ECO:0000305" key="2"/>
<reference key="1">
    <citation type="submission" date="2007-06" db="EMBL/GenBank/DDBJ databases">
        <title>Complete sequence of chromosome of Staphylococcus aureus subsp. aureus JH1.</title>
        <authorList>
            <consortium name="US DOE Joint Genome Institute"/>
            <person name="Copeland A."/>
            <person name="Lucas S."/>
            <person name="Lapidus A."/>
            <person name="Barry K."/>
            <person name="Detter J.C."/>
            <person name="Glavina del Rio T."/>
            <person name="Hammon N."/>
            <person name="Israni S."/>
            <person name="Dalin E."/>
            <person name="Tice H."/>
            <person name="Pitluck S."/>
            <person name="Chain P."/>
            <person name="Malfatti S."/>
            <person name="Shin M."/>
            <person name="Vergez L."/>
            <person name="Schmutz J."/>
            <person name="Larimer F."/>
            <person name="Land M."/>
            <person name="Hauser L."/>
            <person name="Kyrpides N."/>
            <person name="Ivanova N."/>
            <person name="Tomasz A."/>
            <person name="Richardson P."/>
        </authorList>
    </citation>
    <scope>NUCLEOTIDE SEQUENCE [LARGE SCALE GENOMIC DNA]</scope>
    <source>
        <strain>JH1</strain>
    </source>
</reference>
<dbReference type="EMBL" id="CP000736">
    <property type="protein sequence ID" value="ABR52654.1"/>
    <property type="molecule type" value="Genomic_DNA"/>
</dbReference>
<dbReference type="SMR" id="A6U2I6"/>
<dbReference type="KEGG" id="sah:SaurJH1_1810"/>
<dbReference type="HOGENOM" id="CLU_092403_0_1_9"/>
<dbReference type="GO" id="GO:0015935">
    <property type="term" value="C:small ribosomal subunit"/>
    <property type="evidence" value="ECO:0007669"/>
    <property type="project" value="InterPro"/>
</dbReference>
<dbReference type="GO" id="GO:0019843">
    <property type="term" value="F:rRNA binding"/>
    <property type="evidence" value="ECO:0007669"/>
    <property type="project" value="UniProtKB-UniRule"/>
</dbReference>
<dbReference type="GO" id="GO:0003735">
    <property type="term" value="F:structural constituent of ribosome"/>
    <property type="evidence" value="ECO:0007669"/>
    <property type="project" value="InterPro"/>
</dbReference>
<dbReference type="GO" id="GO:0042274">
    <property type="term" value="P:ribosomal small subunit biogenesis"/>
    <property type="evidence" value="ECO:0007669"/>
    <property type="project" value="TreeGrafter"/>
</dbReference>
<dbReference type="GO" id="GO:0006412">
    <property type="term" value="P:translation"/>
    <property type="evidence" value="ECO:0007669"/>
    <property type="project" value="UniProtKB-UniRule"/>
</dbReference>
<dbReference type="CDD" id="cd00165">
    <property type="entry name" value="S4"/>
    <property type="match status" value="1"/>
</dbReference>
<dbReference type="FunFam" id="1.10.1050.10:FF:000001">
    <property type="entry name" value="30S ribosomal protein S4"/>
    <property type="match status" value="1"/>
</dbReference>
<dbReference type="FunFam" id="3.10.290.10:FF:000001">
    <property type="entry name" value="30S ribosomal protein S4"/>
    <property type="match status" value="1"/>
</dbReference>
<dbReference type="Gene3D" id="1.10.1050.10">
    <property type="entry name" value="Ribosomal Protein S4 Delta 41, Chain A, domain 1"/>
    <property type="match status" value="1"/>
</dbReference>
<dbReference type="Gene3D" id="3.10.290.10">
    <property type="entry name" value="RNA-binding S4 domain"/>
    <property type="match status" value="1"/>
</dbReference>
<dbReference type="HAMAP" id="MF_01306_B">
    <property type="entry name" value="Ribosomal_uS4_B"/>
    <property type="match status" value="1"/>
</dbReference>
<dbReference type="InterPro" id="IPR022801">
    <property type="entry name" value="Ribosomal_uS4"/>
</dbReference>
<dbReference type="InterPro" id="IPR005709">
    <property type="entry name" value="Ribosomal_uS4_bac-type"/>
</dbReference>
<dbReference type="InterPro" id="IPR018079">
    <property type="entry name" value="Ribosomal_uS4_CS"/>
</dbReference>
<dbReference type="InterPro" id="IPR001912">
    <property type="entry name" value="Ribosomal_uS4_N"/>
</dbReference>
<dbReference type="InterPro" id="IPR002942">
    <property type="entry name" value="S4_RNA-bd"/>
</dbReference>
<dbReference type="InterPro" id="IPR036986">
    <property type="entry name" value="S4_RNA-bd_sf"/>
</dbReference>
<dbReference type="NCBIfam" id="NF003717">
    <property type="entry name" value="PRK05327.1"/>
    <property type="match status" value="1"/>
</dbReference>
<dbReference type="NCBIfam" id="TIGR01017">
    <property type="entry name" value="rpsD_bact"/>
    <property type="match status" value="1"/>
</dbReference>
<dbReference type="PANTHER" id="PTHR11831">
    <property type="entry name" value="30S 40S RIBOSOMAL PROTEIN"/>
    <property type="match status" value="1"/>
</dbReference>
<dbReference type="PANTHER" id="PTHR11831:SF4">
    <property type="entry name" value="SMALL RIBOSOMAL SUBUNIT PROTEIN US4M"/>
    <property type="match status" value="1"/>
</dbReference>
<dbReference type="Pfam" id="PF00163">
    <property type="entry name" value="Ribosomal_S4"/>
    <property type="match status" value="1"/>
</dbReference>
<dbReference type="Pfam" id="PF01479">
    <property type="entry name" value="S4"/>
    <property type="match status" value="1"/>
</dbReference>
<dbReference type="SMART" id="SM01390">
    <property type="entry name" value="Ribosomal_S4"/>
    <property type="match status" value="1"/>
</dbReference>
<dbReference type="SMART" id="SM00363">
    <property type="entry name" value="S4"/>
    <property type="match status" value="1"/>
</dbReference>
<dbReference type="SUPFAM" id="SSF55174">
    <property type="entry name" value="Alpha-L RNA-binding motif"/>
    <property type="match status" value="1"/>
</dbReference>
<dbReference type="PROSITE" id="PS00632">
    <property type="entry name" value="RIBOSOMAL_S4"/>
    <property type="match status" value="1"/>
</dbReference>
<dbReference type="PROSITE" id="PS50889">
    <property type="entry name" value="S4"/>
    <property type="match status" value="1"/>
</dbReference>
<proteinExistence type="inferred from homology"/>
<feature type="chain" id="PRO_1000085994" description="Small ribosomal subunit protein uS4">
    <location>
        <begin position="1"/>
        <end position="200"/>
    </location>
</feature>
<feature type="domain" description="S4 RNA-binding" evidence="1">
    <location>
        <begin position="92"/>
        <end position="155"/>
    </location>
</feature>
<sequence>MARFRGSNWKKSRRLGISLSGTGKELEKRPYAPGQHGPNQRKKLSEYGLQLREKQKLRYLYGMTERQFRNTFDIAGKKFGVHGENFMILLASRLDAVVYSLGLARTRRQARQLVNHGHILVDGKRVDIPSYSVKPGQTISVREKSQKLNIIVESVEINNFVPEYLNFDADSLTGTFVRLPERSELPAEINEQLIVEYYSR</sequence>
<name>RS4_STAA2</name>
<comment type="function">
    <text evidence="1">One of the primary rRNA binding proteins, it binds directly to 16S rRNA where it nucleates assembly of the body of the 30S subunit.</text>
</comment>
<comment type="function">
    <text evidence="1">With S5 and S12 plays an important role in translational accuracy.</text>
</comment>
<comment type="subunit">
    <text evidence="1">Part of the 30S ribosomal subunit. Contacts protein S5. The interaction surface between S4 and S5 is involved in control of translational fidelity.</text>
</comment>
<comment type="similarity">
    <text evidence="1">Belongs to the universal ribosomal protein uS4 family.</text>
</comment>
<protein>
    <recommendedName>
        <fullName evidence="1">Small ribosomal subunit protein uS4</fullName>
    </recommendedName>
    <alternativeName>
        <fullName evidence="2">30S ribosomal protein S4</fullName>
    </alternativeName>
</protein>
<accession>A6U2I6</accession>
<gene>
    <name evidence="1" type="primary">rpsD</name>
    <name type="ordered locus">SaurJH1_1810</name>
</gene>
<keyword id="KW-0687">Ribonucleoprotein</keyword>
<keyword id="KW-0689">Ribosomal protein</keyword>
<keyword id="KW-0694">RNA-binding</keyword>
<keyword id="KW-0699">rRNA-binding</keyword>
<organism>
    <name type="scientific">Staphylococcus aureus (strain JH1)</name>
    <dbReference type="NCBI Taxonomy" id="359787"/>
    <lineage>
        <taxon>Bacteria</taxon>
        <taxon>Bacillati</taxon>
        <taxon>Bacillota</taxon>
        <taxon>Bacilli</taxon>
        <taxon>Bacillales</taxon>
        <taxon>Staphylococcaceae</taxon>
        <taxon>Staphylococcus</taxon>
    </lineage>
</organism>